<proteinExistence type="inferred from homology"/>
<keyword id="KW-0472">Membrane</keyword>
<keyword id="KW-0602">Photosynthesis</keyword>
<keyword id="KW-1185">Reference proteome</keyword>
<keyword id="KW-0677">Repeat</keyword>
<keyword id="KW-0793">Thylakoid</keyword>
<keyword id="KW-0802">TPR repeat</keyword>
<dbReference type="EMBL" id="BA000019">
    <property type="protein sequence ID" value="BAB74892.1"/>
    <property type="molecule type" value="Genomic_DNA"/>
</dbReference>
<dbReference type="PIR" id="AB2205">
    <property type="entry name" value="AB2205"/>
</dbReference>
<dbReference type="RefSeq" id="WP_010997344.1">
    <property type="nucleotide sequence ID" value="NZ_RSCN01000001.1"/>
</dbReference>
<dbReference type="SMR" id="Q8YS98"/>
<dbReference type="STRING" id="103690.gene:10495230"/>
<dbReference type="KEGG" id="ana:all3193"/>
<dbReference type="eggNOG" id="COG0457">
    <property type="taxonomic scope" value="Bacteria"/>
</dbReference>
<dbReference type="OrthoDB" id="9429505at2"/>
<dbReference type="Proteomes" id="UP000002483">
    <property type="component" value="Chromosome"/>
</dbReference>
<dbReference type="GO" id="GO:0031676">
    <property type="term" value="C:plasma membrane-derived thylakoid membrane"/>
    <property type="evidence" value="ECO:0007669"/>
    <property type="project" value="UniProtKB-SubCell"/>
</dbReference>
<dbReference type="GO" id="GO:0015979">
    <property type="term" value="P:photosynthesis"/>
    <property type="evidence" value="ECO:0007669"/>
    <property type="project" value="UniProtKB-UniRule"/>
</dbReference>
<dbReference type="Gene3D" id="1.25.40.10">
    <property type="entry name" value="Tetratricopeptide repeat domain"/>
    <property type="match status" value="1"/>
</dbReference>
<dbReference type="HAMAP" id="MF_00439">
    <property type="entry name" value="Ycf3"/>
    <property type="match status" value="1"/>
</dbReference>
<dbReference type="InterPro" id="IPR022818">
    <property type="entry name" value="PSI_Ycf3_assembly"/>
</dbReference>
<dbReference type="InterPro" id="IPR011990">
    <property type="entry name" value="TPR-like_helical_dom_sf"/>
</dbReference>
<dbReference type="InterPro" id="IPR019734">
    <property type="entry name" value="TPR_rpt"/>
</dbReference>
<dbReference type="InterPro" id="IPR051685">
    <property type="entry name" value="Ycf3/AcsC/BcsC/TPR_MFPF"/>
</dbReference>
<dbReference type="NCBIfam" id="NF002725">
    <property type="entry name" value="PRK02603.1"/>
    <property type="match status" value="1"/>
</dbReference>
<dbReference type="PANTHER" id="PTHR44943">
    <property type="entry name" value="CELLULOSE SYNTHASE OPERON PROTEIN C"/>
    <property type="match status" value="1"/>
</dbReference>
<dbReference type="PANTHER" id="PTHR44943:SF8">
    <property type="entry name" value="TPR REPEAT-CONTAINING PROTEIN MJ0263"/>
    <property type="match status" value="1"/>
</dbReference>
<dbReference type="Pfam" id="PF00515">
    <property type="entry name" value="TPR_1"/>
    <property type="match status" value="2"/>
</dbReference>
<dbReference type="SMART" id="SM00028">
    <property type="entry name" value="TPR"/>
    <property type="match status" value="3"/>
</dbReference>
<dbReference type="SUPFAM" id="SSF48452">
    <property type="entry name" value="TPR-like"/>
    <property type="match status" value="1"/>
</dbReference>
<dbReference type="PROSITE" id="PS50005">
    <property type="entry name" value="TPR"/>
    <property type="match status" value="3"/>
</dbReference>
<dbReference type="PROSITE" id="PS50293">
    <property type="entry name" value="TPR_REGION"/>
    <property type="match status" value="1"/>
</dbReference>
<protein>
    <recommendedName>
        <fullName evidence="1">Photosystem I assembly protein Ycf3</fullName>
    </recommendedName>
</protein>
<evidence type="ECO:0000255" key="1">
    <source>
        <dbReference type="HAMAP-Rule" id="MF_00439"/>
    </source>
</evidence>
<reference key="1">
    <citation type="journal article" date="2001" name="DNA Res.">
        <title>Complete genomic sequence of the filamentous nitrogen-fixing cyanobacterium Anabaena sp. strain PCC 7120.</title>
        <authorList>
            <person name="Kaneko T."/>
            <person name="Nakamura Y."/>
            <person name="Wolk C.P."/>
            <person name="Kuritz T."/>
            <person name="Sasamoto S."/>
            <person name="Watanabe A."/>
            <person name="Iriguchi M."/>
            <person name="Ishikawa A."/>
            <person name="Kawashima K."/>
            <person name="Kimura T."/>
            <person name="Kishida Y."/>
            <person name="Kohara M."/>
            <person name="Matsumoto M."/>
            <person name="Matsuno A."/>
            <person name="Muraki A."/>
            <person name="Nakazaki N."/>
            <person name="Shimpo S."/>
            <person name="Sugimoto M."/>
            <person name="Takazawa M."/>
            <person name="Yamada M."/>
            <person name="Yasuda M."/>
            <person name="Tabata S."/>
        </authorList>
    </citation>
    <scope>NUCLEOTIDE SEQUENCE [LARGE SCALE GENOMIC DNA]</scope>
    <source>
        <strain>PCC 7120 / SAG 25.82 / UTEX 2576</strain>
    </source>
</reference>
<comment type="function">
    <text evidence="1">Essential for the assembly of the photosystem I (PSI) complex. May act as a chaperone-like factor to guide the assembly of the PSI subunits.</text>
</comment>
<comment type="subcellular location">
    <subcellularLocation>
        <location evidence="1">Cellular thylakoid membrane</location>
        <topology evidence="1">Peripheral membrane protein</topology>
    </subcellularLocation>
</comment>
<comment type="similarity">
    <text evidence="1">Belongs to the Ycf3 family.</text>
</comment>
<name>YCF3_NOSS1</name>
<gene>
    <name evidence="1" type="primary">ycf3</name>
    <name type="ordered locus">all3193</name>
</gene>
<feature type="chain" id="PRO_0000217827" description="Photosystem I assembly protein Ycf3">
    <location>
        <begin position="1"/>
        <end position="173"/>
    </location>
</feature>
<feature type="repeat" description="TPR 1">
    <location>
        <begin position="35"/>
        <end position="68"/>
    </location>
</feature>
<feature type="repeat" description="TPR 2">
    <location>
        <begin position="72"/>
        <end position="105"/>
    </location>
</feature>
<feature type="repeat" description="TPR 3">
    <location>
        <begin position="120"/>
        <end position="153"/>
    </location>
</feature>
<accession>Q8YS98</accession>
<sequence length="173" mass="19918">MPRTQKNDNFVDKSFTVMADIILKILPTNKKAKEAFVYYRDGMSAQAEGEYAEALEYYEEALTLEEDTNDRGYILYNMGLIYASNGDHDKALELYHQAIELNPRLPQALNNIAVIYHYQGEKAKETGDHDGGEALFDQAADYWIRAIRMAPNNYIEAQNWLKTTGRMQIDVFF</sequence>
<organism>
    <name type="scientific">Nostoc sp. (strain PCC 7120 / SAG 25.82 / UTEX 2576)</name>
    <dbReference type="NCBI Taxonomy" id="103690"/>
    <lineage>
        <taxon>Bacteria</taxon>
        <taxon>Bacillati</taxon>
        <taxon>Cyanobacteriota</taxon>
        <taxon>Cyanophyceae</taxon>
        <taxon>Nostocales</taxon>
        <taxon>Nostocaceae</taxon>
        <taxon>Nostoc</taxon>
    </lineage>
</organism>